<gene>
    <name evidence="1" type="primary">tyrS</name>
    <name type="ordered locus">BH08670</name>
</gene>
<accession>Q6G3B6</accession>
<reference key="1">
    <citation type="journal article" date="2004" name="Proc. Natl. Acad. Sci. U.S.A.">
        <title>The louse-borne human pathogen Bartonella quintana is a genomic derivative of the zoonotic agent Bartonella henselae.</title>
        <authorList>
            <person name="Alsmark U.C.M."/>
            <person name="Frank A.C."/>
            <person name="Karlberg E.O."/>
            <person name="Legault B.-A."/>
            <person name="Ardell D.H."/>
            <person name="Canbaeck B."/>
            <person name="Eriksson A.-S."/>
            <person name="Naeslund A.K."/>
            <person name="Handley S.A."/>
            <person name="Huvet M."/>
            <person name="La Scola B."/>
            <person name="Holmberg M."/>
            <person name="Andersson S.G.E."/>
        </authorList>
    </citation>
    <scope>NUCLEOTIDE SEQUENCE [LARGE SCALE GENOMIC DNA]</scope>
    <source>
        <strain>ATCC 49882 / DSM 28221 / CCUG 30454 / Houston 1</strain>
    </source>
</reference>
<protein>
    <recommendedName>
        <fullName evidence="1">Tyrosine--tRNA ligase</fullName>
        <ecNumber evidence="1">6.1.1.1</ecNumber>
    </recommendedName>
    <alternativeName>
        <fullName evidence="1">Tyrosyl-tRNA synthetase</fullName>
        <shortName evidence="1">TyrRS</shortName>
    </alternativeName>
</protein>
<evidence type="ECO:0000255" key="1">
    <source>
        <dbReference type="HAMAP-Rule" id="MF_02006"/>
    </source>
</evidence>
<proteinExistence type="inferred from homology"/>
<feature type="chain" id="PRO_0000234681" description="Tyrosine--tRNA ligase">
    <location>
        <begin position="1"/>
        <end position="417"/>
    </location>
</feature>
<feature type="domain" description="S4 RNA-binding" evidence="1">
    <location>
        <begin position="350"/>
        <end position="417"/>
    </location>
</feature>
<feature type="short sequence motif" description="'HIGH' region">
    <location>
        <begin position="44"/>
        <end position="53"/>
    </location>
</feature>
<feature type="short sequence motif" description="'KMSKS' region">
    <location>
        <begin position="236"/>
        <end position="240"/>
    </location>
</feature>
<feature type="binding site" evidence="1">
    <location>
        <position position="39"/>
    </location>
    <ligand>
        <name>L-tyrosine</name>
        <dbReference type="ChEBI" id="CHEBI:58315"/>
    </ligand>
</feature>
<feature type="binding site" evidence="1">
    <location>
        <position position="176"/>
    </location>
    <ligand>
        <name>L-tyrosine</name>
        <dbReference type="ChEBI" id="CHEBI:58315"/>
    </ligand>
</feature>
<feature type="binding site" evidence="1">
    <location>
        <position position="180"/>
    </location>
    <ligand>
        <name>L-tyrosine</name>
        <dbReference type="ChEBI" id="CHEBI:58315"/>
    </ligand>
</feature>
<feature type="binding site" evidence="1">
    <location>
        <position position="239"/>
    </location>
    <ligand>
        <name>ATP</name>
        <dbReference type="ChEBI" id="CHEBI:30616"/>
    </ligand>
</feature>
<dbReference type="EC" id="6.1.1.1" evidence="1"/>
<dbReference type="EMBL" id="BX897699">
    <property type="protein sequence ID" value="CAF27665.1"/>
    <property type="molecule type" value="Genomic_DNA"/>
</dbReference>
<dbReference type="RefSeq" id="WP_011180760.1">
    <property type="nucleotide sequence ID" value="NZ_LRIJ02000001.1"/>
</dbReference>
<dbReference type="SMR" id="Q6G3B6"/>
<dbReference type="PaxDb" id="283166-BH08670"/>
<dbReference type="EnsemblBacteria" id="CAF27665">
    <property type="protein sequence ID" value="CAF27665"/>
    <property type="gene ID" value="BH08670"/>
</dbReference>
<dbReference type="GeneID" id="92985471"/>
<dbReference type="KEGG" id="bhe:BH08670"/>
<dbReference type="eggNOG" id="COG0162">
    <property type="taxonomic scope" value="Bacteria"/>
</dbReference>
<dbReference type="OrthoDB" id="9804243at2"/>
<dbReference type="Proteomes" id="UP000000421">
    <property type="component" value="Chromosome"/>
</dbReference>
<dbReference type="GO" id="GO:0005829">
    <property type="term" value="C:cytosol"/>
    <property type="evidence" value="ECO:0007669"/>
    <property type="project" value="TreeGrafter"/>
</dbReference>
<dbReference type="GO" id="GO:0005524">
    <property type="term" value="F:ATP binding"/>
    <property type="evidence" value="ECO:0007669"/>
    <property type="project" value="UniProtKB-UniRule"/>
</dbReference>
<dbReference type="GO" id="GO:0003723">
    <property type="term" value="F:RNA binding"/>
    <property type="evidence" value="ECO:0007669"/>
    <property type="project" value="UniProtKB-KW"/>
</dbReference>
<dbReference type="GO" id="GO:0004831">
    <property type="term" value="F:tyrosine-tRNA ligase activity"/>
    <property type="evidence" value="ECO:0007669"/>
    <property type="project" value="UniProtKB-UniRule"/>
</dbReference>
<dbReference type="GO" id="GO:0006437">
    <property type="term" value="P:tyrosyl-tRNA aminoacylation"/>
    <property type="evidence" value="ECO:0007669"/>
    <property type="project" value="UniProtKB-UniRule"/>
</dbReference>
<dbReference type="CDD" id="cd00165">
    <property type="entry name" value="S4"/>
    <property type="match status" value="1"/>
</dbReference>
<dbReference type="CDD" id="cd00805">
    <property type="entry name" value="TyrRS_core"/>
    <property type="match status" value="1"/>
</dbReference>
<dbReference type="FunFam" id="1.10.240.10:FF:000001">
    <property type="entry name" value="Tyrosine--tRNA ligase"/>
    <property type="match status" value="1"/>
</dbReference>
<dbReference type="FunFam" id="3.40.50.620:FF:000008">
    <property type="entry name" value="Tyrosine--tRNA ligase"/>
    <property type="match status" value="1"/>
</dbReference>
<dbReference type="Gene3D" id="3.40.50.620">
    <property type="entry name" value="HUPs"/>
    <property type="match status" value="1"/>
</dbReference>
<dbReference type="Gene3D" id="3.10.290.10">
    <property type="entry name" value="RNA-binding S4 domain"/>
    <property type="match status" value="1"/>
</dbReference>
<dbReference type="Gene3D" id="1.10.240.10">
    <property type="entry name" value="Tyrosyl-Transfer RNA Synthetase"/>
    <property type="match status" value="1"/>
</dbReference>
<dbReference type="HAMAP" id="MF_02006">
    <property type="entry name" value="Tyr_tRNA_synth_type1"/>
    <property type="match status" value="1"/>
</dbReference>
<dbReference type="InterPro" id="IPR002305">
    <property type="entry name" value="aa-tRNA-synth_Ic"/>
</dbReference>
<dbReference type="InterPro" id="IPR014729">
    <property type="entry name" value="Rossmann-like_a/b/a_fold"/>
</dbReference>
<dbReference type="InterPro" id="IPR036986">
    <property type="entry name" value="S4_RNA-bd_sf"/>
</dbReference>
<dbReference type="InterPro" id="IPR054608">
    <property type="entry name" value="SYY-like_C"/>
</dbReference>
<dbReference type="InterPro" id="IPR002307">
    <property type="entry name" value="Tyr-tRNA-ligase"/>
</dbReference>
<dbReference type="InterPro" id="IPR024088">
    <property type="entry name" value="Tyr-tRNA-ligase_bac-type"/>
</dbReference>
<dbReference type="InterPro" id="IPR024107">
    <property type="entry name" value="Tyr-tRNA-ligase_bac_1"/>
</dbReference>
<dbReference type="NCBIfam" id="TIGR00234">
    <property type="entry name" value="tyrS"/>
    <property type="match status" value="1"/>
</dbReference>
<dbReference type="PANTHER" id="PTHR11766:SF0">
    <property type="entry name" value="TYROSINE--TRNA LIGASE, MITOCHONDRIAL"/>
    <property type="match status" value="1"/>
</dbReference>
<dbReference type="PANTHER" id="PTHR11766">
    <property type="entry name" value="TYROSYL-TRNA SYNTHETASE"/>
    <property type="match status" value="1"/>
</dbReference>
<dbReference type="Pfam" id="PF22421">
    <property type="entry name" value="SYY_C-terminal"/>
    <property type="match status" value="1"/>
</dbReference>
<dbReference type="Pfam" id="PF00579">
    <property type="entry name" value="tRNA-synt_1b"/>
    <property type="match status" value="1"/>
</dbReference>
<dbReference type="PRINTS" id="PR01040">
    <property type="entry name" value="TRNASYNTHTYR"/>
</dbReference>
<dbReference type="SUPFAM" id="SSF55174">
    <property type="entry name" value="Alpha-L RNA-binding motif"/>
    <property type="match status" value="1"/>
</dbReference>
<dbReference type="SUPFAM" id="SSF52374">
    <property type="entry name" value="Nucleotidylyl transferase"/>
    <property type="match status" value="1"/>
</dbReference>
<dbReference type="PROSITE" id="PS50889">
    <property type="entry name" value="S4"/>
    <property type="match status" value="1"/>
</dbReference>
<name>SYY_BARHE</name>
<organism>
    <name type="scientific">Bartonella henselae (strain ATCC 49882 / DSM 28221 / CCUG 30454 / Houston 1)</name>
    <name type="common">Rochalimaea henselae</name>
    <dbReference type="NCBI Taxonomy" id="283166"/>
    <lineage>
        <taxon>Bacteria</taxon>
        <taxon>Pseudomonadati</taxon>
        <taxon>Pseudomonadota</taxon>
        <taxon>Alphaproteobacteria</taxon>
        <taxon>Hyphomicrobiales</taxon>
        <taxon>Bartonellaceae</taxon>
        <taxon>Bartonella</taxon>
    </lineage>
</organism>
<keyword id="KW-0030">Aminoacyl-tRNA synthetase</keyword>
<keyword id="KW-0067">ATP-binding</keyword>
<keyword id="KW-0963">Cytoplasm</keyword>
<keyword id="KW-0436">Ligase</keyword>
<keyword id="KW-0547">Nucleotide-binding</keyword>
<keyword id="KW-0648">Protein biosynthesis</keyword>
<keyword id="KW-0694">RNA-binding</keyword>
<comment type="function">
    <text evidence="1">Catalyzes the attachment of tyrosine to tRNA(Tyr) in a two-step reaction: tyrosine is first activated by ATP to form Tyr-AMP and then transferred to the acceptor end of tRNA(Tyr).</text>
</comment>
<comment type="catalytic activity">
    <reaction evidence="1">
        <text>tRNA(Tyr) + L-tyrosine + ATP = L-tyrosyl-tRNA(Tyr) + AMP + diphosphate + H(+)</text>
        <dbReference type="Rhea" id="RHEA:10220"/>
        <dbReference type="Rhea" id="RHEA-COMP:9706"/>
        <dbReference type="Rhea" id="RHEA-COMP:9707"/>
        <dbReference type="ChEBI" id="CHEBI:15378"/>
        <dbReference type="ChEBI" id="CHEBI:30616"/>
        <dbReference type="ChEBI" id="CHEBI:33019"/>
        <dbReference type="ChEBI" id="CHEBI:58315"/>
        <dbReference type="ChEBI" id="CHEBI:78442"/>
        <dbReference type="ChEBI" id="CHEBI:78536"/>
        <dbReference type="ChEBI" id="CHEBI:456215"/>
        <dbReference type="EC" id="6.1.1.1"/>
    </reaction>
</comment>
<comment type="subunit">
    <text evidence="1">Homodimer.</text>
</comment>
<comment type="subcellular location">
    <subcellularLocation>
        <location evidence="1">Cytoplasm</location>
    </subcellularLocation>
</comment>
<comment type="similarity">
    <text evidence="1">Belongs to the class-I aminoacyl-tRNA synthetase family. TyrS type 1 subfamily.</text>
</comment>
<sequence>MLAFKSDFLNIMSERGFIHQISDEKGLDALFSKEVVSAYIGFDPTASSLHAGSLLQIMMLYWLQKTGHRPIVLMGGGTGLIGDPSFKDEARRLLTQDDIAANIADIKKVFARYLTFGERETDSCIVNNAEWLCTLNYLEFLRDIGKHFSVNRMLSFDSVRLRLEREHSLSFLEFNYMILQAYDFVELYKRYGLRMQMGGSDQWGNIINGIELGHRLGTPQLYALTSPLLTTSSGAKMGKSLNGAVWLNADMLSPYQFWQYWRNTEDADVTRFLKLYTPLPMDEILKLSALQGTEINEAKKILATEITAMLHGRDLANAVAETARKTFEERTLGENLPTFEINANDLKMGTGLLILLVQAGLSKSNSEARRHIQGGGVRVNDHIIEDETHLIREEDINAQGIIKLSFGKKKHVLIKPL</sequence>